<sequence length="133" mass="15920">MSWTRVVVLSLLTTLLFLTFSSVVDSAAVRDDSKAGHPKGPARQVFVPESEASNFFKRRSRRSPRSYAELQAEQRVKIAANERWREYNEEQRNEHENYAEEARDESDERSRETHEQIREYHYDGLYPRYHWFH</sequence>
<comment type="function">
    <text evidence="2">May be involved in the negative control of osteogenic differentiation of osteochondrogenic precursor cells in peripheral zones of fetal cartilage and at the cartilage-bone interface.</text>
</comment>
<comment type="subcellular location">
    <subcellularLocation>
        <location evidence="2">Secreted</location>
        <location evidence="2">Extracellular space</location>
        <location evidence="2">Extracellular matrix</location>
    </subcellularLocation>
</comment>
<comment type="PTM">
    <text evidence="2">Proteolytically cleaved by a furin-like convertase to generate a persistent C-terminal fragment found in almost the entire cartilage matrix, and affecting osteoblast differentiation.</text>
</comment>
<comment type="PTM">
    <text evidence="2">Sulfated on tyrosine residues.</text>
</comment>
<comment type="similarity">
    <text evidence="6">Belongs to the UCMA family.</text>
</comment>
<reference evidence="7" key="1">
    <citation type="journal article" date="2008" name="J. Biol. Chem.">
        <title>Gla-rich protein (GRP), a new vitamin K-dependent protein identified from sturgeon cartilage and highly conserved in vertebrates.</title>
        <authorList>
            <person name="Viegas C.S.B."/>
            <person name="Simes D.C."/>
            <person name="Laize V."/>
            <person name="Williamson M.K."/>
            <person name="Price P.A."/>
            <person name="Cancela M.L."/>
        </authorList>
    </citation>
    <scope>NUCLEOTIDE SEQUENCE [MRNA]</scope>
</reference>
<dbReference type="EMBL" id="EU022752">
    <property type="protein sequence ID" value="ABX09787.1"/>
    <property type="molecule type" value="mRNA"/>
</dbReference>
<dbReference type="RefSeq" id="XP_030296106.1">
    <property type="nucleotide sequence ID" value="XM_030440246.1"/>
</dbReference>
<dbReference type="Ensembl" id="ENSSAUT00010054830.1">
    <property type="protein sequence ID" value="ENSSAUP00010052141.1"/>
    <property type="gene ID" value="ENSSAUG00010021640.1"/>
</dbReference>
<dbReference type="GeneID" id="115595590"/>
<dbReference type="GeneTree" id="ENSGT00390000011492"/>
<dbReference type="InParanoid" id="B9TQX2"/>
<dbReference type="OMA" id="VRYYELQ"/>
<dbReference type="OrthoDB" id="8907123at2759"/>
<dbReference type="Proteomes" id="UP000472265">
    <property type="component" value="Chromosome 14"/>
</dbReference>
<dbReference type="GO" id="GO:0031012">
    <property type="term" value="C:extracellular matrix"/>
    <property type="evidence" value="ECO:0007669"/>
    <property type="project" value="TreeGrafter"/>
</dbReference>
<dbReference type="GO" id="GO:0005576">
    <property type="term" value="C:extracellular region"/>
    <property type="evidence" value="ECO:0007669"/>
    <property type="project" value="UniProtKB-KW"/>
</dbReference>
<dbReference type="GO" id="GO:0048706">
    <property type="term" value="P:embryonic skeletal system development"/>
    <property type="evidence" value="ECO:0007669"/>
    <property type="project" value="TreeGrafter"/>
</dbReference>
<dbReference type="GO" id="GO:0045667">
    <property type="term" value="P:regulation of osteoblast differentiation"/>
    <property type="evidence" value="ECO:0007669"/>
    <property type="project" value="InterPro"/>
</dbReference>
<dbReference type="InterPro" id="IPR031386">
    <property type="entry name" value="UCMA"/>
</dbReference>
<dbReference type="PANTHER" id="PTHR28647">
    <property type="entry name" value="UNIQUE CARTILAGE MATRIX-ASSOCIATED PROTEIN"/>
    <property type="match status" value="1"/>
</dbReference>
<dbReference type="PANTHER" id="PTHR28647:SF2">
    <property type="entry name" value="UNIQUE CARTILAGE MATRIX-ASSOCIATED PROTEIN"/>
    <property type="match status" value="1"/>
</dbReference>
<dbReference type="Pfam" id="PF17085">
    <property type="entry name" value="UCMA"/>
    <property type="match status" value="1"/>
</dbReference>
<proteinExistence type="evidence at transcript level"/>
<feature type="signal peptide" evidence="3">
    <location>
        <begin position="1"/>
        <end position="26"/>
    </location>
</feature>
<feature type="chain" id="PRO_0000371240" description="Unique cartilage matrix-associated protein" evidence="3">
    <location>
        <begin position="27"/>
        <end position="133"/>
    </location>
</feature>
<feature type="propeptide" id="PRO_0000371241" description="Ucma-N" evidence="1">
    <location>
        <begin position="27"/>
        <end position="62"/>
    </location>
</feature>
<feature type="chain" id="PRO_0000371242" description="Unique cartilage matrix-associated protein C-terminal fragment" evidence="1">
    <location>
        <begin position="63"/>
        <end position="133"/>
    </location>
</feature>
<feature type="region of interest" description="Disordered" evidence="4">
    <location>
        <begin position="87"/>
        <end position="115"/>
    </location>
</feature>
<feature type="coiled-coil region" evidence="3">
    <location>
        <begin position="80"/>
        <end position="120"/>
    </location>
</feature>
<feature type="modified residue" description="4-carboxyglutamate" evidence="1">
    <location>
        <position position="69"/>
    </location>
</feature>
<feature type="modified residue" description="4-carboxyglutamate" evidence="1">
    <location>
        <position position="73"/>
    </location>
</feature>
<feature type="modified residue" description="4-carboxyglutamate" evidence="1">
    <location>
        <position position="82"/>
    </location>
</feature>
<feature type="modified residue" description="4-carboxyglutamate" evidence="1">
    <location>
        <position position="86"/>
    </location>
</feature>
<feature type="modified residue" description="4-carboxyglutamate" evidence="1">
    <location>
        <position position="89"/>
    </location>
</feature>
<feature type="modified residue" description="4-carboxyglutamate" evidence="1">
    <location>
        <position position="90"/>
    </location>
</feature>
<feature type="modified residue" description="4-carboxyglutamate" evidence="1">
    <location>
        <position position="94"/>
    </location>
</feature>
<feature type="modified residue" description="4-carboxyglutamate" evidence="1">
    <location>
        <position position="96"/>
    </location>
</feature>
<feature type="modified residue" description="4-carboxyglutamate" evidence="1">
    <location>
        <position position="100"/>
    </location>
</feature>
<feature type="modified residue" description="4-carboxyglutamate" evidence="1">
    <location>
        <position position="101"/>
    </location>
</feature>
<feature type="modified residue" description="4-carboxyglutamate" evidence="1">
    <location>
        <position position="105"/>
    </location>
</feature>
<feature type="modified residue" description="4-carboxyglutamate" evidence="1">
    <location>
        <position position="108"/>
    </location>
</feature>
<feature type="modified residue" description="4-carboxyglutamate" evidence="1">
    <location>
        <position position="112"/>
    </location>
</feature>
<feature type="modified residue" description="4-carboxyglutamate" evidence="1">
    <location>
        <position position="115"/>
    </location>
</feature>
<feature type="modified residue" description="4-carboxyglutamate" evidence="1">
    <location>
        <position position="119"/>
    </location>
</feature>
<name>UCMA_SPAAU</name>
<gene>
    <name type="primary">ucma</name>
    <name type="synonym">grp</name>
</gene>
<accession>B9TQX2</accession>
<keyword id="KW-0175">Coiled coil</keyword>
<keyword id="KW-0272">Extracellular matrix</keyword>
<keyword id="KW-0301">Gamma-carboxyglutamic acid</keyword>
<keyword id="KW-1185">Reference proteome</keyword>
<keyword id="KW-0964">Secreted</keyword>
<keyword id="KW-0732">Signal</keyword>
<keyword id="KW-0765">Sulfation</keyword>
<evidence type="ECO:0000250" key="1">
    <source>
        <dbReference type="UniProtKB" id="B9TQX1"/>
    </source>
</evidence>
<evidence type="ECO:0000250" key="2">
    <source>
        <dbReference type="UniProtKB" id="Q14BU0"/>
    </source>
</evidence>
<evidence type="ECO:0000255" key="3"/>
<evidence type="ECO:0000256" key="4">
    <source>
        <dbReference type="SAM" id="MobiDB-lite"/>
    </source>
</evidence>
<evidence type="ECO:0000303" key="5">
    <source>
    </source>
</evidence>
<evidence type="ECO:0000305" key="6"/>
<evidence type="ECO:0000312" key="7">
    <source>
        <dbReference type="EMBL" id="ABX09787.1"/>
    </source>
</evidence>
<organism>
    <name type="scientific">Sparus aurata</name>
    <name type="common">Gilthead sea bream</name>
    <dbReference type="NCBI Taxonomy" id="8175"/>
    <lineage>
        <taxon>Eukaryota</taxon>
        <taxon>Metazoa</taxon>
        <taxon>Chordata</taxon>
        <taxon>Craniata</taxon>
        <taxon>Vertebrata</taxon>
        <taxon>Euteleostomi</taxon>
        <taxon>Actinopterygii</taxon>
        <taxon>Neopterygii</taxon>
        <taxon>Teleostei</taxon>
        <taxon>Neoteleostei</taxon>
        <taxon>Acanthomorphata</taxon>
        <taxon>Eupercaria</taxon>
        <taxon>Spariformes</taxon>
        <taxon>Sparidae</taxon>
        <taxon>Sparus</taxon>
    </lineage>
</organism>
<protein>
    <recommendedName>
        <fullName evidence="2">Unique cartilage matrix-associated protein</fullName>
    </recommendedName>
    <component>
        <recommendedName>
            <fullName evidence="2">Unique cartilage matrix-associated protein C-terminal fragment</fullName>
            <shortName evidence="2">Ucma-C</shortName>
        </recommendedName>
        <alternativeName>
            <fullName evidence="5 7">Gla-rich protein</fullName>
            <shortName evidence="5">GRP</shortName>
        </alternativeName>
    </component>
</protein>